<dbReference type="EC" id="4.1.99.-" evidence="1"/>
<dbReference type="EMBL" id="AL123456">
    <property type="protein sequence ID" value="CCP46372.1"/>
    <property type="molecule type" value="Genomic_DNA"/>
</dbReference>
<dbReference type="RefSeq" id="NP_218067.1">
    <property type="nucleotide sequence ID" value="NC_000962.3"/>
</dbReference>
<dbReference type="RefSeq" id="WP_003419315.1">
    <property type="nucleotide sequence ID" value="NZ_NVQJ01000014.1"/>
</dbReference>
<dbReference type="SMR" id="I6Y3U6"/>
<dbReference type="FunCoup" id="I6Y3U6">
    <property type="interactions" value="75"/>
</dbReference>
<dbReference type="STRING" id="83332.Rv3550"/>
<dbReference type="PaxDb" id="83332-Rv3550"/>
<dbReference type="DNASU" id="888232"/>
<dbReference type="GeneID" id="888232"/>
<dbReference type="KEGG" id="mtu:Rv3550"/>
<dbReference type="KEGG" id="mtv:RVBD_3550"/>
<dbReference type="PATRIC" id="fig|83332.111.peg.3955"/>
<dbReference type="TubercuList" id="Rv3550"/>
<dbReference type="eggNOG" id="COG1024">
    <property type="taxonomic scope" value="Bacteria"/>
</dbReference>
<dbReference type="InParanoid" id="I6Y3U6"/>
<dbReference type="OrthoDB" id="2988772at2"/>
<dbReference type="PhylomeDB" id="I6Y3U6"/>
<dbReference type="BioCyc" id="MetaCyc:G185E-7827-MONOMER"/>
<dbReference type="UniPathway" id="UPA01058"/>
<dbReference type="Proteomes" id="UP000001584">
    <property type="component" value="Chromosome"/>
</dbReference>
<dbReference type="GO" id="GO:0016829">
    <property type="term" value="F:lyase activity"/>
    <property type="evidence" value="ECO:0007669"/>
    <property type="project" value="UniProtKB-KW"/>
</dbReference>
<dbReference type="GO" id="GO:0006707">
    <property type="term" value="P:cholesterol catabolic process"/>
    <property type="evidence" value="ECO:0007669"/>
    <property type="project" value="UniProtKB-UniPathway"/>
</dbReference>
<dbReference type="GO" id="GO:0006635">
    <property type="term" value="P:fatty acid beta-oxidation"/>
    <property type="evidence" value="ECO:0000318"/>
    <property type="project" value="GO_Central"/>
</dbReference>
<dbReference type="CDD" id="cd06558">
    <property type="entry name" value="crotonase-like"/>
    <property type="match status" value="1"/>
</dbReference>
<dbReference type="FunFam" id="3.90.226.10:FF:000064">
    <property type="entry name" value="Enoyl-CoA hydratase EchA20"/>
    <property type="match status" value="1"/>
</dbReference>
<dbReference type="Gene3D" id="3.90.226.10">
    <property type="entry name" value="2-enoyl-CoA Hydratase, Chain A, domain 1"/>
    <property type="match status" value="1"/>
</dbReference>
<dbReference type="InterPro" id="IPR029045">
    <property type="entry name" value="ClpP/crotonase-like_dom_sf"/>
</dbReference>
<dbReference type="InterPro" id="IPR001753">
    <property type="entry name" value="Enoyl-CoA_hydra/iso"/>
</dbReference>
<dbReference type="NCBIfam" id="NF005925">
    <property type="entry name" value="PRK07938.1"/>
    <property type="match status" value="1"/>
</dbReference>
<dbReference type="PANTHER" id="PTHR11941:SF169">
    <property type="entry name" value="(7AS)-7A-METHYL-1,5-DIOXO-2,3,5,6,7,7A-HEXAHYDRO-1H-INDENE-CARBOXYL-COA HYDROLASE"/>
    <property type="match status" value="1"/>
</dbReference>
<dbReference type="PANTHER" id="PTHR11941">
    <property type="entry name" value="ENOYL-COA HYDRATASE-RELATED"/>
    <property type="match status" value="1"/>
</dbReference>
<dbReference type="Pfam" id="PF00378">
    <property type="entry name" value="ECH_1"/>
    <property type="match status" value="1"/>
</dbReference>
<dbReference type="SUPFAM" id="SSF52096">
    <property type="entry name" value="ClpP/crotonase"/>
    <property type="match status" value="1"/>
</dbReference>
<name>ECH20_MYCTU</name>
<reference key="1">
    <citation type="journal article" date="1998" name="Nature">
        <title>Deciphering the biology of Mycobacterium tuberculosis from the complete genome sequence.</title>
        <authorList>
            <person name="Cole S.T."/>
            <person name="Brosch R."/>
            <person name="Parkhill J."/>
            <person name="Garnier T."/>
            <person name="Churcher C.M."/>
            <person name="Harris D.E."/>
            <person name="Gordon S.V."/>
            <person name="Eiglmeier K."/>
            <person name="Gas S."/>
            <person name="Barry C.E. III"/>
            <person name="Tekaia F."/>
            <person name="Badcock K."/>
            <person name="Basham D."/>
            <person name="Brown D."/>
            <person name="Chillingworth T."/>
            <person name="Connor R."/>
            <person name="Davies R.M."/>
            <person name="Devlin K."/>
            <person name="Feltwell T."/>
            <person name="Gentles S."/>
            <person name="Hamlin N."/>
            <person name="Holroyd S."/>
            <person name="Hornsby T."/>
            <person name="Jagels K."/>
            <person name="Krogh A."/>
            <person name="McLean J."/>
            <person name="Moule S."/>
            <person name="Murphy L.D."/>
            <person name="Oliver S."/>
            <person name="Osborne J."/>
            <person name="Quail M.A."/>
            <person name="Rajandream M.A."/>
            <person name="Rogers J."/>
            <person name="Rutter S."/>
            <person name="Seeger K."/>
            <person name="Skelton S."/>
            <person name="Squares S."/>
            <person name="Squares R."/>
            <person name="Sulston J.E."/>
            <person name="Taylor K."/>
            <person name="Whitehead S."/>
            <person name="Barrell B.G."/>
        </authorList>
    </citation>
    <scope>NUCLEOTIDE SEQUENCE [LARGE SCALE GENOMIC DNA]</scope>
    <source>
        <strain>ATCC 25618 / H37Rv</strain>
    </source>
</reference>
<reference key="2">
    <citation type="journal article" date="2011" name="Mol. Cell. Proteomics">
        <title>Proteogenomic analysis of Mycobacterium tuberculosis by high resolution mass spectrometry.</title>
        <authorList>
            <person name="Kelkar D.S."/>
            <person name="Kumar D."/>
            <person name="Kumar P."/>
            <person name="Balakrishnan L."/>
            <person name="Muthusamy B."/>
            <person name="Yadav A.K."/>
            <person name="Shrivastava P."/>
            <person name="Marimuthu A."/>
            <person name="Anand S."/>
            <person name="Sundaram H."/>
            <person name="Kingsbury R."/>
            <person name="Harsha H.C."/>
            <person name="Nair B."/>
            <person name="Prasad T.S."/>
            <person name="Chauhan D.S."/>
            <person name="Katoch K."/>
            <person name="Katoch V.M."/>
            <person name="Kumar P."/>
            <person name="Chaerkady R."/>
            <person name="Ramachandran S."/>
            <person name="Dash D."/>
            <person name="Pandey A."/>
        </authorList>
    </citation>
    <scope>IDENTIFICATION BY MASS SPECTROMETRY [LARGE SCALE ANALYSIS]</scope>
    <source>
        <strain>ATCC 25618 / H37Rv</strain>
    </source>
</reference>
<reference key="3">
    <citation type="journal article" date="2017" name="MBio">
        <title>Catabolism of the last two steroid rings in Mycobacterium tuberculosis and other bacteria.</title>
        <authorList>
            <person name="Crowe A.M."/>
            <person name="Casabon I."/>
            <person name="Brown K.L."/>
            <person name="Liu J."/>
            <person name="Lian J."/>
            <person name="Rogalski J.C."/>
            <person name="Hurst T.E."/>
            <person name="Snieckus V."/>
            <person name="Foster L.J."/>
            <person name="Eltis L.D."/>
        </authorList>
    </citation>
    <scope>FUNCTION</scope>
    <scope>PATHWAY</scope>
    <source>
        <strain>Erdman</strain>
    </source>
</reference>
<sequence length="247" mass="26333">MPITSTTPEPGIVAVTVDYPPVNAIPSKAWFDLADAVTAAGANSDTRAVILRAEGRGFNAGVDIKEMQRTEGFTALIDANRGCFAAFRAVYECAVPVIAAVNGFCVGGGIGLVGNSDVIVASEDATFGLPEVERGALGAATHLSRLVPQHLMRRLFFTAATVDAATLQHFGSVHEVVSRDQLDEAALRVARDIAAKDTRVIRAAKEALNFIDVQRVNASYRMEQGFTFELNLAGVADEHRDAFVKKS</sequence>
<accession>I6Y3U6</accession>
<keyword id="KW-0153">Cholesterol metabolism</keyword>
<keyword id="KW-0443">Lipid metabolism</keyword>
<keyword id="KW-0456">Lyase</keyword>
<keyword id="KW-1185">Reference proteome</keyword>
<keyword id="KW-0753">Steroid metabolism</keyword>
<keyword id="KW-1207">Sterol metabolism</keyword>
<gene>
    <name evidence="3" type="primary">echA20</name>
    <name evidence="5" type="ordered locus">Rv3550</name>
</gene>
<protein>
    <recommendedName>
        <fullName evidence="4">(7aS)-7a-methyl-1,5-dioxo-2,3,5,6,7,7a-hexahydro-1H-indene-carboxyl-CoA hydrolase</fullName>
        <shortName evidence="4">HIEC-CoA hydrolase</shortName>
        <ecNumber evidence="1">4.1.99.-</ecNumber>
    </recommendedName>
</protein>
<proteinExistence type="evidence at protein level"/>
<organism>
    <name type="scientific">Mycobacterium tuberculosis (strain ATCC 25618 / H37Rv)</name>
    <dbReference type="NCBI Taxonomy" id="83332"/>
    <lineage>
        <taxon>Bacteria</taxon>
        <taxon>Bacillati</taxon>
        <taxon>Actinomycetota</taxon>
        <taxon>Actinomycetes</taxon>
        <taxon>Mycobacteriales</taxon>
        <taxon>Mycobacteriaceae</taxon>
        <taxon>Mycobacterium</taxon>
        <taxon>Mycobacterium tuberculosis complex</taxon>
    </lineage>
</organism>
<comment type="function">
    <text evidence="1 2">Involved in the final steps of cholesterol and steroid degradation (PubMed:28377529). Catalyzes the hydrolytic ring D opening of (7aS)-7a-methyl-1,5-dioxo-2,3,5,6,7,7a-hexahydro-1H-indene-carboxyl-CoA (HIEC-CoA) to (3E)-2-(2-carboxylatoethyl)-3-methyl-6-oxocyclohex-1-ene-1-carboxyl-CoA (COCHEA-CoA) (By similarity).</text>
</comment>
<comment type="catalytic activity">
    <reaction evidence="1">
        <text>(7aS)-7a-methyl-1,5-dioxo-2,3,5,6,7,7a-hexahydro-1H-indene-carboxyl-CoA + H2O = (3E)-2-(2-carboxylatoethyl)-3-methyl-6-oxocyclohex-1-ene-1-carboxyl-CoA + H(+)</text>
        <dbReference type="Rhea" id="RHEA:66360"/>
        <dbReference type="ChEBI" id="CHEBI:15377"/>
        <dbReference type="ChEBI" id="CHEBI:15378"/>
        <dbReference type="ChEBI" id="CHEBI:167100"/>
        <dbReference type="ChEBI" id="CHEBI:167101"/>
    </reaction>
    <physiologicalReaction direction="left-to-right" evidence="1">
        <dbReference type="Rhea" id="RHEA:66361"/>
    </physiologicalReaction>
</comment>
<comment type="pathway">
    <text evidence="2">Steroid metabolism; cholesterol degradation.</text>
</comment>
<comment type="similarity">
    <text evidence="4">Belongs to the enoyl-CoA hydratase/isomerase family.</text>
</comment>
<evidence type="ECO:0000250" key="1">
    <source>
        <dbReference type="UniProtKB" id="Q0S7P8"/>
    </source>
</evidence>
<evidence type="ECO:0000269" key="2">
    <source>
    </source>
</evidence>
<evidence type="ECO:0000303" key="3">
    <source>
    </source>
</evidence>
<evidence type="ECO:0000305" key="4"/>
<evidence type="ECO:0000312" key="5">
    <source>
        <dbReference type="EMBL" id="CCP46372.1"/>
    </source>
</evidence>
<feature type="chain" id="PRO_0000452310" description="(7aS)-7a-methyl-1,5-dioxo-2,3,5,6,7,7a-hexahydro-1H-indene-carboxyl-CoA hydrolase">
    <location>
        <begin position="1"/>
        <end position="247"/>
    </location>
</feature>